<name>ZNTB_ECOUT</name>
<reference key="1">
    <citation type="journal article" date="2006" name="Proc. Natl. Acad. Sci. U.S.A.">
        <title>Identification of genes subject to positive selection in uropathogenic strains of Escherichia coli: a comparative genomics approach.</title>
        <authorList>
            <person name="Chen S.L."/>
            <person name="Hung C.-S."/>
            <person name="Xu J."/>
            <person name="Reigstad C.S."/>
            <person name="Magrini V."/>
            <person name="Sabo A."/>
            <person name="Blasiar D."/>
            <person name="Bieri T."/>
            <person name="Meyer R.R."/>
            <person name="Ozersky P."/>
            <person name="Armstrong J.R."/>
            <person name="Fulton R.S."/>
            <person name="Latreille J.P."/>
            <person name="Spieth J."/>
            <person name="Hooton T.M."/>
            <person name="Mardis E.R."/>
            <person name="Hultgren S.J."/>
            <person name="Gordon J.I."/>
        </authorList>
    </citation>
    <scope>NUCLEOTIDE SEQUENCE [LARGE SCALE GENOMIC DNA]</scope>
    <source>
        <strain>UTI89 / UPEC</strain>
    </source>
</reference>
<gene>
    <name evidence="1" type="primary">zntB</name>
    <name type="ordered locus">UTI89_C1613</name>
</gene>
<dbReference type="EMBL" id="CP000243">
    <property type="protein sequence ID" value="ABE07091.1"/>
    <property type="molecule type" value="Genomic_DNA"/>
</dbReference>
<dbReference type="RefSeq" id="WP_000387388.1">
    <property type="nucleotide sequence ID" value="NZ_CP064825.1"/>
</dbReference>
<dbReference type="SMR" id="Q1RC23"/>
<dbReference type="GeneID" id="93775479"/>
<dbReference type="KEGG" id="eci:UTI89_C1613"/>
<dbReference type="HOGENOM" id="CLU_007127_2_0_6"/>
<dbReference type="Proteomes" id="UP000001952">
    <property type="component" value="Chromosome"/>
</dbReference>
<dbReference type="GO" id="GO:0005886">
    <property type="term" value="C:plasma membrane"/>
    <property type="evidence" value="ECO:0007669"/>
    <property type="project" value="UniProtKB-SubCell"/>
</dbReference>
<dbReference type="GO" id="GO:0050897">
    <property type="term" value="F:cobalt ion binding"/>
    <property type="evidence" value="ECO:0007669"/>
    <property type="project" value="TreeGrafter"/>
</dbReference>
<dbReference type="GO" id="GO:0015087">
    <property type="term" value="F:cobalt ion transmembrane transporter activity"/>
    <property type="evidence" value="ECO:0007669"/>
    <property type="project" value="TreeGrafter"/>
</dbReference>
<dbReference type="GO" id="GO:0000287">
    <property type="term" value="F:magnesium ion binding"/>
    <property type="evidence" value="ECO:0007669"/>
    <property type="project" value="TreeGrafter"/>
</dbReference>
<dbReference type="GO" id="GO:0015095">
    <property type="term" value="F:magnesium ion transmembrane transporter activity"/>
    <property type="evidence" value="ECO:0007669"/>
    <property type="project" value="TreeGrafter"/>
</dbReference>
<dbReference type="GO" id="GO:0005385">
    <property type="term" value="F:zinc ion transmembrane transporter activity"/>
    <property type="evidence" value="ECO:0007669"/>
    <property type="project" value="UniProtKB-UniRule"/>
</dbReference>
<dbReference type="CDD" id="cd12833">
    <property type="entry name" value="ZntB-like_1"/>
    <property type="match status" value="1"/>
</dbReference>
<dbReference type="FunFam" id="1.20.58.340:FF:000002">
    <property type="entry name" value="Zinc transport protein ZntB"/>
    <property type="match status" value="1"/>
</dbReference>
<dbReference type="FunFam" id="1.20.58.340:FF:000003">
    <property type="entry name" value="Zinc transport protein ZntB"/>
    <property type="match status" value="1"/>
</dbReference>
<dbReference type="FunFam" id="3.30.460.20:FF:000001">
    <property type="entry name" value="Zinc transport protein ZntB"/>
    <property type="match status" value="1"/>
</dbReference>
<dbReference type="Gene3D" id="3.30.460.20">
    <property type="entry name" value="CorA soluble domain-like"/>
    <property type="match status" value="1"/>
</dbReference>
<dbReference type="Gene3D" id="1.20.58.340">
    <property type="entry name" value="Magnesium transport protein CorA, transmembrane region"/>
    <property type="match status" value="2"/>
</dbReference>
<dbReference type="HAMAP" id="MF_01565">
    <property type="entry name" value="ZntB"/>
    <property type="match status" value="1"/>
</dbReference>
<dbReference type="InterPro" id="IPR045861">
    <property type="entry name" value="CorA_cytoplasmic_dom"/>
</dbReference>
<dbReference type="InterPro" id="IPR045863">
    <property type="entry name" value="CorA_TM1_TM2"/>
</dbReference>
<dbReference type="InterPro" id="IPR002523">
    <property type="entry name" value="MgTranspt_CorA/ZnTranspt_ZntB"/>
</dbReference>
<dbReference type="InterPro" id="IPR023714">
    <property type="entry name" value="Zn_transp_ZntB"/>
</dbReference>
<dbReference type="NCBIfam" id="NF007092">
    <property type="entry name" value="PRK09546.1"/>
    <property type="match status" value="1"/>
</dbReference>
<dbReference type="PANTHER" id="PTHR46494">
    <property type="entry name" value="CORA FAMILY METAL ION TRANSPORTER (EUROFUNG)"/>
    <property type="match status" value="1"/>
</dbReference>
<dbReference type="PANTHER" id="PTHR46494:SF3">
    <property type="entry name" value="ZINC TRANSPORT PROTEIN ZNTB"/>
    <property type="match status" value="1"/>
</dbReference>
<dbReference type="Pfam" id="PF01544">
    <property type="entry name" value="CorA"/>
    <property type="match status" value="1"/>
</dbReference>
<dbReference type="SUPFAM" id="SSF143865">
    <property type="entry name" value="CorA soluble domain-like"/>
    <property type="match status" value="1"/>
</dbReference>
<dbReference type="SUPFAM" id="SSF144083">
    <property type="entry name" value="Magnesium transport protein CorA, transmembrane region"/>
    <property type="match status" value="1"/>
</dbReference>
<accession>Q1RC23</accession>
<sequence>MEAIKGSDVNVPDAVFAWMLDGRGGVKPLENTDVIDEAHPCWLHLNYVHHDSAQWLATTPLLPNNVRDALAGESTRPRVSRLGEGTLITLRCINGSTDERPDQLVAMRVYMDGRLIVSTRQRKVLALDDVVSDLEEGTGPTDCGGWLVDVCDALTDHSSEFIEQLHDKIIDLEDNLLDQQIPPRGFLALLRKQLIVMRRYMAPQRDVYARLASERLPWMSDDQRRRMQDIADRLGRGLDEIDACIARTGVMADEIAQVMQENLARRTYTMSLMAMVFLPSTFLTGLFGVNLGGIPGGGWQFGFSIFCILLVVLIGGVALWLHRSKWL</sequence>
<keyword id="KW-0997">Cell inner membrane</keyword>
<keyword id="KW-1003">Cell membrane</keyword>
<keyword id="KW-0406">Ion transport</keyword>
<keyword id="KW-0472">Membrane</keyword>
<keyword id="KW-0812">Transmembrane</keyword>
<keyword id="KW-1133">Transmembrane helix</keyword>
<keyword id="KW-0813">Transport</keyword>
<keyword id="KW-0862">Zinc</keyword>
<feature type="chain" id="PRO_1000069072" description="Zinc transport protein ZntB">
    <location>
        <begin position="1"/>
        <end position="327"/>
    </location>
</feature>
<feature type="topological domain" description="Cytoplasmic" evidence="1">
    <location>
        <begin position="1"/>
        <end position="273"/>
    </location>
</feature>
<feature type="transmembrane region" description="Helical" evidence="1">
    <location>
        <begin position="274"/>
        <end position="294"/>
    </location>
</feature>
<feature type="topological domain" description="Periplasmic" evidence="1">
    <location>
        <begin position="295"/>
        <end position="300"/>
    </location>
</feature>
<feature type="transmembrane region" description="Helical" evidence="1">
    <location>
        <begin position="301"/>
        <end position="321"/>
    </location>
</feature>
<feature type="topological domain" description="Cytoplasmic" evidence="1">
    <location>
        <begin position="322"/>
        <end position="327"/>
    </location>
</feature>
<evidence type="ECO:0000255" key="1">
    <source>
        <dbReference type="HAMAP-Rule" id="MF_01565"/>
    </source>
</evidence>
<protein>
    <recommendedName>
        <fullName evidence="1">Zinc transport protein ZntB</fullName>
    </recommendedName>
</protein>
<comment type="function">
    <text evidence="1">Zinc transporter. Acts as a Zn(2+):proton symporter, which likely mediates zinc ion uptake.</text>
</comment>
<comment type="catalytic activity">
    <reaction evidence="1">
        <text>Zn(2+)(out) + H(+)(out) = Zn(2+)(in) + H(+)(in)</text>
        <dbReference type="Rhea" id="RHEA:71195"/>
        <dbReference type="ChEBI" id="CHEBI:15378"/>
        <dbReference type="ChEBI" id="CHEBI:29105"/>
    </reaction>
    <physiologicalReaction direction="left-to-right" evidence="1">
        <dbReference type="Rhea" id="RHEA:71196"/>
    </physiologicalReaction>
</comment>
<comment type="subcellular location">
    <subcellularLocation>
        <location evidence="1">Cell inner membrane</location>
        <topology evidence="1">Multi-pass membrane protein</topology>
    </subcellularLocation>
</comment>
<comment type="similarity">
    <text evidence="1">Belongs to the CorA metal ion transporter (MIT) (TC 1.A.35) family.</text>
</comment>
<organism>
    <name type="scientific">Escherichia coli (strain UTI89 / UPEC)</name>
    <dbReference type="NCBI Taxonomy" id="364106"/>
    <lineage>
        <taxon>Bacteria</taxon>
        <taxon>Pseudomonadati</taxon>
        <taxon>Pseudomonadota</taxon>
        <taxon>Gammaproteobacteria</taxon>
        <taxon>Enterobacterales</taxon>
        <taxon>Enterobacteriaceae</taxon>
        <taxon>Escherichia</taxon>
    </lineage>
</organism>
<proteinExistence type="inferred from homology"/>